<proteinExistence type="inferred from homology"/>
<keyword id="KW-1185">Reference proteome</keyword>
<keyword id="KW-0687">Ribonucleoprotein</keyword>
<keyword id="KW-0689">Ribosomal protein</keyword>
<keyword id="KW-0694">RNA-binding</keyword>
<keyword id="KW-0699">rRNA-binding</keyword>
<accession>P57582</accession>
<dbReference type="EMBL" id="BA000003">
    <property type="protein sequence ID" value="BAB13208.1"/>
    <property type="molecule type" value="Genomic_DNA"/>
</dbReference>
<dbReference type="RefSeq" id="NP_240322.1">
    <property type="nucleotide sequence ID" value="NC_002528.1"/>
</dbReference>
<dbReference type="SMR" id="P57582"/>
<dbReference type="STRING" id="563178.BUAP5A_508"/>
<dbReference type="EnsemblBacteria" id="BAB13208">
    <property type="protein sequence ID" value="BAB13208"/>
    <property type="gene ID" value="BAB13208"/>
</dbReference>
<dbReference type="KEGG" id="buc:BU515"/>
<dbReference type="PATRIC" id="fig|107806.10.peg.520"/>
<dbReference type="eggNOG" id="COG0186">
    <property type="taxonomic scope" value="Bacteria"/>
</dbReference>
<dbReference type="HOGENOM" id="CLU_073626_1_1_6"/>
<dbReference type="Proteomes" id="UP000001806">
    <property type="component" value="Chromosome"/>
</dbReference>
<dbReference type="GO" id="GO:0022627">
    <property type="term" value="C:cytosolic small ribosomal subunit"/>
    <property type="evidence" value="ECO:0007669"/>
    <property type="project" value="TreeGrafter"/>
</dbReference>
<dbReference type="GO" id="GO:0019843">
    <property type="term" value="F:rRNA binding"/>
    <property type="evidence" value="ECO:0007669"/>
    <property type="project" value="UniProtKB-UniRule"/>
</dbReference>
<dbReference type="GO" id="GO:0003735">
    <property type="term" value="F:structural constituent of ribosome"/>
    <property type="evidence" value="ECO:0007669"/>
    <property type="project" value="InterPro"/>
</dbReference>
<dbReference type="GO" id="GO:0006412">
    <property type="term" value="P:translation"/>
    <property type="evidence" value="ECO:0007669"/>
    <property type="project" value="UniProtKB-UniRule"/>
</dbReference>
<dbReference type="CDD" id="cd00364">
    <property type="entry name" value="Ribosomal_uS17"/>
    <property type="match status" value="1"/>
</dbReference>
<dbReference type="FunFam" id="2.40.50.140:FF:000014">
    <property type="entry name" value="30S ribosomal protein S17"/>
    <property type="match status" value="1"/>
</dbReference>
<dbReference type="Gene3D" id="2.40.50.140">
    <property type="entry name" value="Nucleic acid-binding proteins"/>
    <property type="match status" value="1"/>
</dbReference>
<dbReference type="HAMAP" id="MF_01345_B">
    <property type="entry name" value="Ribosomal_uS17_B"/>
    <property type="match status" value="1"/>
</dbReference>
<dbReference type="InterPro" id="IPR012340">
    <property type="entry name" value="NA-bd_OB-fold"/>
</dbReference>
<dbReference type="InterPro" id="IPR000266">
    <property type="entry name" value="Ribosomal_uS17"/>
</dbReference>
<dbReference type="InterPro" id="IPR019984">
    <property type="entry name" value="Ribosomal_uS17_bact/chlr"/>
</dbReference>
<dbReference type="InterPro" id="IPR019979">
    <property type="entry name" value="Ribosomal_uS17_CS"/>
</dbReference>
<dbReference type="NCBIfam" id="NF004123">
    <property type="entry name" value="PRK05610.1"/>
    <property type="match status" value="1"/>
</dbReference>
<dbReference type="NCBIfam" id="TIGR03635">
    <property type="entry name" value="uS17_bact"/>
    <property type="match status" value="1"/>
</dbReference>
<dbReference type="PANTHER" id="PTHR10744">
    <property type="entry name" value="40S RIBOSOMAL PROTEIN S11 FAMILY MEMBER"/>
    <property type="match status" value="1"/>
</dbReference>
<dbReference type="PANTHER" id="PTHR10744:SF1">
    <property type="entry name" value="SMALL RIBOSOMAL SUBUNIT PROTEIN US17M"/>
    <property type="match status" value="1"/>
</dbReference>
<dbReference type="Pfam" id="PF00366">
    <property type="entry name" value="Ribosomal_S17"/>
    <property type="match status" value="1"/>
</dbReference>
<dbReference type="PRINTS" id="PR00973">
    <property type="entry name" value="RIBOSOMALS17"/>
</dbReference>
<dbReference type="SUPFAM" id="SSF50249">
    <property type="entry name" value="Nucleic acid-binding proteins"/>
    <property type="match status" value="1"/>
</dbReference>
<dbReference type="PROSITE" id="PS00056">
    <property type="entry name" value="RIBOSOMAL_S17"/>
    <property type="match status" value="1"/>
</dbReference>
<evidence type="ECO:0000255" key="1">
    <source>
        <dbReference type="HAMAP-Rule" id="MF_01345"/>
    </source>
</evidence>
<evidence type="ECO:0000305" key="2"/>
<gene>
    <name evidence="1" type="primary">rpsQ</name>
    <name type="ordered locus">BU515</name>
</gene>
<feature type="chain" id="PRO_0000128449" description="Small ribosomal subunit protein uS17">
    <location>
        <begin position="1"/>
        <end position="83"/>
    </location>
</feature>
<organism>
    <name type="scientific">Buchnera aphidicola subsp. Acyrthosiphon pisum (strain APS)</name>
    <name type="common">Acyrthosiphon pisum symbiotic bacterium</name>
    <dbReference type="NCBI Taxonomy" id="107806"/>
    <lineage>
        <taxon>Bacteria</taxon>
        <taxon>Pseudomonadati</taxon>
        <taxon>Pseudomonadota</taxon>
        <taxon>Gammaproteobacteria</taxon>
        <taxon>Enterobacterales</taxon>
        <taxon>Erwiniaceae</taxon>
        <taxon>Buchnera</taxon>
    </lineage>
</organism>
<protein>
    <recommendedName>
        <fullName evidence="1">Small ribosomal subunit protein uS17</fullName>
    </recommendedName>
    <alternativeName>
        <fullName evidence="2">30S ribosomal protein S17</fullName>
    </alternativeName>
</protein>
<sequence>MEKIRTLQGRVISNKMQKSAVVAIERFVKHIIYGKFIKRTTKLHIHDEKNECTVGDLIEIRESRPISKTKSWVLVRIIEKTVF</sequence>
<reference key="1">
    <citation type="journal article" date="2000" name="Nature">
        <title>Genome sequence of the endocellular bacterial symbiont of aphids Buchnera sp. APS.</title>
        <authorList>
            <person name="Shigenobu S."/>
            <person name="Watanabe H."/>
            <person name="Hattori M."/>
            <person name="Sakaki Y."/>
            <person name="Ishikawa H."/>
        </authorList>
    </citation>
    <scope>NUCLEOTIDE SEQUENCE [LARGE SCALE GENOMIC DNA]</scope>
    <source>
        <strain>APS</strain>
    </source>
</reference>
<comment type="function">
    <text evidence="1">One of the primary rRNA binding proteins, it binds specifically to the 5'-end of 16S ribosomal RNA.</text>
</comment>
<comment type="subunit">
    <text evidence="1">Part of the 30S ribosomal subunit.</text>
</comment>
<comment type="similarity">
    <text evidence="1">Belongs to the universal ribosomal protein uS17 family.</text>
</comment>
<name>RS17_BUCAI</name>